<keyword id="KW-0030">Aminoacyl-tRNA synthetase</keyword>
<keyword id="KW-0067">ATP-binding</keyword>
<keyword id="KW-0436">Ligase</keyword>
<keyword id="KW-0479">Metal-binding</keyword>
<keyword id="KW-0547">Nucleotide-binding</keyword>
<keyword id="KW-1185">Reference proteome</keyword>
<keyword id="KW-0862">Zinc</keyword>
<organism>
    <name type="scientific">Geobacter sulfurreducens (strain ATCC 51573 / DSM 12127 / PCA)</name>
    <dbReference type="NCBI Taxonomy" id="243231"/>
    <lineage>
        <taxon>Bacteria</taxon>
        <taxon>Pseudomonadati</taxon>
        <taxon>Thermodesulfobacteriota</taxon>
        <taxon>Desulfuromonadia</taxon>
        <taxon>Geobacterales</taxon>
        <taxon>Geobacteraceae</taxon>
        <taxon>Geobacter</taxon>
    </lineage>
</organism>
<sequence>MCVPSTPQPPVIGRFAPSPTGPLHVGSLVAAVASYAMARRQGGLWLVRMEDLDTPRVVPGMADDILRTLECLGFDWDGDIMRQSRRADAYGAALQRLLAAGHAYPCGCSRAEIARAATAPHDGDGEIPYPNLCRRGLPPGKEPRSFRVRVPAEPVEFTDLVMGPQHHDLPAMCGDFVIKRADGLFAYQLAVVVDDEAQGVTQVVRGADLLSSTPRQIVLQRLLGFDTPVYAHVPLVTGPGGGKLSKRDNALSLAAGRDLTREGGMLLLAALRFLGQSPPAELAGASGARVLRWAAGNFEPSAIPTAAAPFHASP</sequence>
<name>GLUQ_GEOSL</name>
<reference key="1">
    <citation type="journal article" date="2003" name="Science">
        <title>Genome of Geobacter sulfurreducens: metal reduction in subsurface environments.</title>
        <authorList>
            <person name="Methe B.A."/>
            <person name="Nelson K.E."/>
            <person name="Eisen J.A."/>
            <person name="Paulsen I.T."/>
            <person name="Nelson W.C."/>
            <person name="Heidelberg J.F."/>
            <person name="Wu D."/>
            <person name="Wu M."/>
            <person name="Ward N.L."/>
            <person name="Beanan M.J."/>
            <person name="Dodson R.J."/>
            <person name="Madupu R."/>
            <person name="Brinkac L.M."/>
            <person name="Daugherty S.C."/>
            <person name="DeBoy R.T."/>
            <person name="Durkin A.S."/>
            <person name="Gwinn M.L."/>
            <person name="Kolonay J.F."/>
            <person name="Sullivan S.A."/>
            <person name="Haft D.H."/>
            <person name="Selengut J."/>
            <person name="Davidsen T.M."/>
            <person name="Zafar N."/>
            <person name="White O."/>
            <person name="Tran B."/>
            <person name="Romero C."/>
            <person name="Forberger H.A."/>
            <person name="Weidman J.F."/>
            <person name="Khouri H.M."/>
            <person name="Feldblyum T.V."/>
            <person name="Utterback T.R."/>
            <person name="Van Aken S.E."/>
            <person name="Lovley D.R."/>
            <person name="Fraser C.M."/>
        </authorList>
    </citation>
    <scope>NUCLEOTIDE SEQUENCE [LARGE SCALE GENOMIC DNA]</scope>
    <source>
        <strain>ATCC 51573 / DSM 12127 / PCA</strain>
    </source>
</reference>
<gene>
    <name evidence="1" type="primary">gluQ</name>
    <name type="ordered locus">GSU1329</name>
</gene>
<dbReference type="EC" id="6.1.1.-" evidence="1"/>
<dbReference type="EMBL" id="AE017180">
    <property type="protein sequence ID" value="AAR34705.1"/>
    <property type="molecule type" value="Genomic_DNA"/>
</dbReference>
<dbReference type="RefSeq" id="NP_952382.1">
    <property type="nucleotide sequence ID" value="NC_002939.5"/>
</dbReference>
<dbReference type="SMR" id="Q74DI7"/>
<dbReference type="FunCoup" id="Q74DI7">
    <property type="interactions" value="12"/>
</dbReference>
<dbReference type="STRING" id="243231.GSU1329"/>
<dbReference type="EnsemblBacteria" id="AAR34705">
    <property type="protein sequence ID" value="AAR34705"/>
    <property type="gene ID" value="GSU1329"/>
</dbReference>
<dbReference type="KEGG" id="gsu:GSU1329"/>
<dbReference type="PATRIC" id="fig|243231.5.peg.1326"/>
<dbReference type="eggNOG" id="COG0008">
    <property type="taxonomic scope" value="Bacteria"/>
</dbReference>
<dbReference type="HOGENOM" id="CLU_015768_0_1_7"/>
<dbReference type="InParanoid" id="Q74DI7"/>
<dbReference type="OrthoDB" id="9807503at2"/>
<dbReference type="Proteomes" id="UP000000577">
    <property type="component" value="Chromosome"/>
</dbReference>
<dbReference type="GO" id="GO:0005829">
    <property type="term" value="C:cytosol"/>
    <property type="evidence" value="ECO:0000318"/>
    <property type="project" value="GO_Central"/>
</dbReference>
<dbReference type="GO" id="GO:0005524">
    <property type="term" value="F:ATP binding"/>
    <property type="evidence" value="ECO:0007669"/>
    <property type="project" value="UniProtKB-KW"/>
</dbReference>
<dbReference type="GO" id="GO:0004818">
    <property type="term" value="F:glutamate-tRNA ligase activity"/>
    <property type="evidence" value="ECO:0000318"/>
    <property type="project" value="GO_Central"/>
</dbReference>
<dbReference type="GO" id="GO:0008270">
    <property type="term" value="F:zinc ion binding"/>
    <property type="evidence" value="ECO:0007669"/>
    <property type="project" value="UniProtKB-UniRule"/>
</dbReference>
<dbReference type="GO" id="GO:0006424">
    <property type="term" value="P:glutamyl-tRNA aminoacylation"/>
    <property type="evidence" value="ECO:0000318"/>
    <property type="project" value="GO_Central"/>
</dbReference>
<dbReference type="GO" id="GO:0006400">
    <property type="term" value="P:tRNA modification"/>
    <property type="evidence" value="ECO:0007669"/>
    <property type="project" value="InterPro"/>
</dbReference>
<dbReference type="Gene3D" id="3.40.50.620">
    <property type="entry name" value="HUPs"/>
    <property type="match status" value="1"/>
</dbReference>
<dbReference type="HAMAP" id="MF_01428">
    <property type="entry name" value="Glu_Q_tRNA_synth"/>
    <property type="match status" value="1"/>
</dbReference>
<dbReference type="InterPro" id="IPR022380">
    <property type="entry name" value="Glu-Q_tRNA(Asp)_Synthase"/>
</dbReference>
<dbReference type="InterPro" id="IPR000924">
    <property type="entry name" value="Glu/Gln-tRNA-synth"/>
</dbReference>
<dbReference type="InterPro" id="IPR020058">
    <property type="entry name" value="Glu/Gln-tRNA-synth_Ib_cat-dom"/>
</dbReference>
<dbReference type="InterPro" id="IPR049940">
    <property type="entry name" value="GluQ/Sye"/>
</dbReference>
<dbReference type="InterPro" id="IPR014729">
    <property type="entry name" value="Rossmann-like_a/b/a_fold"/>
</dbReference>
<dbReference type="NCBIfam" id="NF004314">
    <property type="entry name" value="PRK05710.1-3"/>
    <property type="match status" value="1"/>
</dbReference>
<dbReference type="NCBIfam" id="NF004315">
    <property type="entry name" value="PRK05710.1-4"/>
    <property type="match status" value="1"/>
</dbReference>
<dbReference type="NCBIfam" id="TIGR03838">
    <property type="entry name" value="queuosine_YadB"/>
    <property type="match status" value="1"/>
</dbReference>
<dbReference type="PANTHER" id="PTHR43311">
    <property type="entry name" value="GLUTAMATE--TRNA LIGASE"/>
    <property type="match status" value="1"/>
</dbReference>
<dbReference type="PANTHER" id="PTHR43311:SF1">
    <property type="entry name" value="GLUTAMYL-Q TRNA(ASP) SYNTHETASE"/>
    <property type="match status" value="1"/>
</dbReference>
<dbReference type="Pfam" id="PF00749">
    <property type="entry name" value="tRNA-synt_1c"/>
    <property type="match status" value="1"/>
</dbReference>
<dbReference type="PRINTS" id="PR00987">
    <property type="entry name" value="TRNASYNTHGLU"/>
</dbReference>
<dbReference type="SUPFAM" id="SSF52374">
    <property type="entry name" value="Nucleotidylyl transferase"/>
    <property type="match status" value="1"/>
</dbReference>
<protein>
    <recommendedName>
        <fullName evidence="1">Glutamyl-Q tRNA(Asp) synthetase</fullName>
        <shortName evidence="1">Glu-Q-RSs</shortName>
        <ecNumber evidence="1">6.1.1.-</ecNumber>
    </recommendedName>
</protein>
<accession>Q74DI7</accession>
<comment type="function">
    <text evidence="1">Catalyzes the tRNA-independent activation of glutamate in presence of ATP and the subsequent transfer of glutamate onto a tRNA(Asp). Glutamate is transferred on the 2-amino-5-(4,5-dihydroxy-2-cyclopenten-1-yl) moiety of the queuosine in the wobble position of the QUC anticodon.</text>
</comment>
<comment type="cofactor">
    <cofactor evidence="1">
        <name>Zn(2+)</name>
        <dbReference type="ChEBI" id="CHEBI:29105"/>
    </cofactor>
    <text evidence="1">Binds 1 zinc ion per subunit.</text>
</comment>
<comment type="similarity">
    <text evidence="1">Belongs to the class-I aminoacyl-tRNA synthetase family. GluQ subfamily.</text>
</comment>
<feature type="chain" id="PRO_0000208303" description="Glutamyl-Q tRNA(Asp) synthetase">
    <location>
        <begin position="1"/>
        <end position="314"/>
    </location>
</feature>
<feature type="short sequence motif" description="'HIGH' region">
    <location>
        <begin position="17"/>
        <end position="27"/>
    </location>
</feature>
<feature type="short sequence motif" description="'KMSKS' region">
    <location>
        <begin position="243"/>
        <end position="247"/>
    </location>
</feature>
<feature type="binding site" evidence="1">
    <location>
        <begin position="14"/>
        <end position="18"/>
    </location>
    <ligand>
        <name>L-glutamate</name>
        <dbReference type="ChEBI" id="CHEBI:29985"/>
    </ligand>
</feature>
<feature type="binding site" evidence="1">
    <location>
        <position position="50"/>
    </location>
    <ligand>
        <name>L-glutamate</name>
        <dbReference type="ChEBI" id="CHEBI:29985"/>
    </ligand>
</feature>
<feature type="binding site" evidence="1">
    <location>
        <position position="106"/>
    </location>
    <ligand>
        <name>Zn(2+)</name>
        <dbReference type="ChEBI" id="CHEBI:29105"/>
    </ligand>
</feature>
<feature type="binding site" evidence="1">
    <location>
        <position position="108"/>
    </location>
    <ligand>
        <name>Zn(2+)</name>
        <dbReference type="ChEBI" id="CHEBI:29105"/>
    </ligand>
</feature>
<feature type="binding site" evidence="1">
    <location>
        <position position="129"/>
    </location>
    <ligand>
        <name>Zn(2+)</name>
        <dbReference type="ChEBI" id="CHEBI:29105"/>
    </ligand>
</feature>
<feature type="binding site" evidence="1">
    <location>
        <position position="133"/>
    </location>
    <ligand>
        <name>Zn(2+)</name>
        <dbReference type="ChEBI" id="CHEBI:29105"/>
    </ligand>
</feature>
<feature type="binding site" evidence="1">
    <location>
        <position position="187"/>
    </location>
    <ligand>
        <name>L-glutamate</name>
        <dbReference type="ChEBI" id="CHEBI:29985"/>
    </ligand>
</feature>
<feature type="binding site" evidence="1">
    <location>
        <position position="205"/>
    </location>
    <ligand>
        <name>L-glutamate</name>
        <dbReference type="ChEBI" id="CHEBI:29985"/>
    </ligand>
</feature>
<feature type="binding site" evidence="1">
    <location>
        <position position="246"/>
    </location>
    <ligand>
        <name>ATP</name>
        <dbReference type="ChEBI" id="CHEBI:30616"/>
    </ligand>
</feature>
<proteinExistence type="inferred from homology"/>
<evidence type="ECO:0000255" key="1">
    <source>
        <dbReference type="HAMAP-Rule" id="MF_01428"/>
    </source>
</evidence>